<reference key="1">
    <citation type="journal article" date="1993" name="Science">
        <title>PAC-1: a mitogen-induced nuclear protein tyrosine phosphatase.</title>
        <authorList>
            <person name="Rohan P."/>
            <person name="Davis P."/>
            <person name="Moskaluk C.A."/>
            <person name="Kearns M."/>
            <person name="Krutzsch H."/>
            <person name="Siebenlist U."/>
            <person name="Kelly K."/>
        </authorList>
    </citation>
    <scope>NUCLEOTIDE SEQUENCE [MRNA]</scope>
</reference>
<reference key="2">
    <citation type="journal article" date="1995" name="Genomics">
        <title>Genomic organization and chromosomal localization of the DUSP2 gene, encoding a MAP kinase phosphatase, to human 2p11.2-q11.</title>
        <authorList>
            <person name="Yi H."/>
            <person name="Morton C.C."/>
            <person name="Weremowicz S."/>
            <person name="McBride O.W."/>
            <person name="Kelly K."/>
        </authorList>
    </citation>
    <scope>NUCLEOTIDE SEQUENCE [GENOMIC DNA]</scope>
</reference>
<reference key="3">
    <citation type="journal article" date="2005" name="Nature">
        <title>Generation and annotation of the DNA sequences of human chromosomes 2 and 4.</title>
        <authorList>
            <person name="Hillier L.W."/>
            <person name="Graves T.A."/>
            <person name="Fulton R.S."/>
            <person name="Fulton L.A."/>
            <person name="Pepin K.H."/>
            <person name="Minx P."/>
            <person name="Wagner-McPherson C."/>
            <person name="Layman D."/>
            <person name="Wylie K."/>
            <person name="Sekhon M."/>
            <person name="Becker M.C."/>
            <person name="Fewell G.A."/>
            <person name="Delehaunty K.D."/>
            <person name="Miner T.L."/>
            <person name="Nash W.E."/>
            <person name="Kremitzki C."/>
            <person name="Oddy L."/>
            <person name="Du H."/>
            <person name="Sun H."/>
            <person name="Bradshaw-Cordum H."/>
            <person name="Ali J."/>
            <person name="Carter J."/>
            <person name="Cordes M."/>
            <person name="Harris A."/>
            <person name="Isak A."/>
            <person name="van Brunt A."/>
            <person name="Nguyen C."/>
            <person name="Du F."/>
            <person name="Courtney L."/>
            <person name="Kalicki J."/>
            <person name="Ozersky P."/>
            <person name="Abbott S."/>
            <person name="Armstrong J."/>
            <person name="Belter E.A."/>
            <person name="Caruso L."/>
            <person name="Cedroni M."/>
            <person name="Cotton M."/>
            <person name="Davidson T."/>
            <person name="Desai A."/>
            <person name="Elliott G."/>
            <person name="Erb T."/>
            <person name="Fronick C."/>
            <person name="Gaige T."/>
            <person name="Haakenson W."/>
            <person name="Haglund K."/>
            <person name="Holmes A."/>
            <person name="Harkins R."/>
            <person name="Kim K."/>
            <person name="Kruchowski S.S."/>
            <person name="Strong C.M."/>
            <person name="Grewal N."/>
            <person name="Goyea E."/>
            <person name="Hou S."/>
            <person name="Levy A."/>
            <person name="Martinka S."/>
            <person name="Mead K."/>
            <person name="McLellan M.D."/>
            <person name="Meyer R."/>
            <person name="Randall-Maher J."/>
            <person name="Tomlinson C."/>
            <person name="Dauphin-Kohlberg S."/>
            <person name="Kozlowicz-Reilly A."/>
            <person name="Shah N."/>
            <person name="Swearengen-Shahid S."/>
            <person name="Snider J."/>
            <person name="Strong J.T."/>
            <person name="Thompson J."/>
            <person name="Yoakum M."/>
            <person name="Leonard S."/>
            <person name="Pearman C."/>
            <person name="Trani L."/>
            <person name="Radionenko M."/>
            <person name="Waligorski J.E."/>
            <person name="Wang C."/>
            <person name="Rock S.M."/>
            <person name="Tin-Wollam A.-M."/>
            <person name="Maupin R."/>
            <person name="Latreille P."/>
            <person name="Wendl M.C."/>
            <person name="Yang S.-P."/>
            <person name="Pohl C."/>
            <person name="Wallis J.W."/>
            <person name="Spieth J."/>
            <person name="Bieri T.A."/>
            <person name="Berkowicz N."/>
            <person name="Nelson J.O."/>
            <person name="Osborne J."/>
            <person name="Ding L."/>
            <person name="Meyer R."/>
            <person name="Sabo A."/>
            <person name="Shotland Y."/>
            <person name="Sinha P."/>
            <person name="Wohldmann P.E."/>
            <person name="Cook L.L."/>
            <person name="Hickenbotham M.T."/>
            <person name="Eldred J."/>
            <person name="Williams D."/>
            <person name="Jones T.A."/>
            <person name="She X."/>
            <person name="Ciccarelli F.D."/>
            <person name="Izaurralde E."/>
            <person name="Taylor J."/>
            <person name="Schmutz J."/>
            <person name="Myers R.M."/>
            <person name="Cox D.R."/>
            <person name="Huang X."/>
            <person name="McPherson J.D."/>
            <person name="Mardis E.R."/>
            <person name="Clifton S.W."/>
            <person name="Warren W.C."/>
            <person name="Chinwalla A.T."/>
            <person name="Eddy S.R."/>
            <person name="Marra M.A."/>
            <person name="Ovcharenko I."/>
            <person name="Furey T.S."/>
            <person name="Miller W."/>
            <person name="Eichler E.E."/>
            <person name="Bork P."/>
            <person name="Suyama M."/>
            <person name="Torrents D."/>
            <person name="Waterston R.H."/>
            <person name="Wilson R.K."/>
        </authorList>
    </citation>
    <scope>NUCLEOTIDE SEQUENCE [LARGE SCALE GENOMIC DNA]</scope>
</reference>
<reference key="4">
    <citation type="submission" date="2005-09" db="EMBL/GenBank/DDBJ databases">
        <authorList>
            <person name="Mural R.J."/>
            <person name="Istrail S."/>
            <person name="Sutton G.G."/>
            <person name="Florea L."/>
            <person name="Halpern A.L."/>
            <person name="Mobarry C.M."/>
            <person name="Lippert R."/>
            <person name="Walenz B."/>
            <person name="Shatkay H."/>
            <person name="Dew I."/>
            <person name="Miller J.R."/>
            <person name="Flanigan M.J."/>
            <person name="Edwards N.J."/>
            <person name="Bolanos R."/>
            <person name="Fasulo D."/>
            <person name="Halldorsson B.V."/>
            <person name="Hannenhalli S."/>
            <person name="Turner R."/>
            <person name="Yooseph S."/>
            <person name="Lu F."/>
            <person name="Nusskern D.R."/>
            <person name="Shue B.C."/>
            <person name="Zheng X.H."/>
            <person name="Zhong F."/>
            <person name="Delcher A.L."/>
            <person name="Huson D.H."/>
            <person name="Kravitz S.A."/>
            <person name="Mouchard L."/>
            <person name="Reinert K."/>
            <person name="Remington K.A."/>
            <person name="Clark A.G."/>
            <person name="Waterman M.S."/>
            <person name="Eichler E.E."/>
            <person name="Adams M.D."/>
            <person name="Hunkapiller M.W."/>
            <person name="Myers E.W."/>
            <person name="Venter J.C."/>
        </authorList>
    </citation>
    <scope>NUCLEOTIDE SEQUENCE [LARGE SCALE GENOMIC DNA]</scope>
</reference>
<reference key="5">
    <citation type="journal article" date="2004" name="Genome Res.">
        <title>The status, quality, and expansion of the NIH full-length cDNA project: the Mammalian Gene Collection (MGC).</title>
        <authorList>
            <consortium name="The MGC Project Team"/>
        </authorList>
    </citation>
    <scope>NUCLEOTIDE SEQUENCE [LARGE SCALE MRNA]</scope>
    <source>
        <tissue>B-cell</tissue>
    </source>
</reference>
<reference key="6">
    <citation type="journal article" date="1994" name="Nature">
        <title>Control of MAP kinase activation by the mitogen-induced threonine/tyrosine phosphatase PAC1.</title>
        <authorList>
            <person name="Ward Y."/>
            <person name="Gupta S."/>
            <person name="Jensen P."/>
            <person name="Wartmann M."/>
            <person name="Davis R.J."/>
            <person name="Kelly K."/>
        </authorList>
    </citation>
    <scope>FUNCTION</scope>
    <scope>CATALYTIC ACTIVITY</scope>
    <scope>MUTAGENESIS OF CYS-257</scope>
</reference>
<reference key="7">
    <citation type="journal article" date="2003" name="Structure">
        <title>Solution structure of the MAPK phosphatase PAC-1 catalytic domain. Insights into substrate-induced enzymatic activation of MKP.</title>
        <authorList>
            <person name="Farooq A."/>
            <person name="Plotnikova O."/>
            <person name="Chaturvedi G."/>
            <person name="Yan S."/>
            <person name="Zeng L."/>
            <person name="Zhang Q."/>
            <person name="Zhou M.M."/>
        </authorList>
    </citation>
    <scope>STRUCTURE BY NMR OF 170-314</scope>
</reference>
<comment type="function">
    <text evidence="1 5">Dephosphorylates both phosphorylated Thr and Tyr residues in MAPK1, and dephosphorylation of phosphotyrosine is slightly faster than that of phosphothreonine (PubMed:8107850). Can dephosphorylate MAPK1 (By similarity).</text>
</comment>
<comment type="catalytic activity">
    <reaction evidence="4 5">
        <text>O-phospho-L-tyrosyl-[protein] + H2O = L-tyrosyl-[protein] + phosphate</text>
        <dbReference type="Rhea" id="RHEA:10684"/>
        <dbReference type="Rhea" id="RHEA-COMP:10136"/>
        <dbReference type="Rhea" id="RHEA-COMP:20101"/>
        <dbReference type="ChEBI" id="CHEBI:15377"/>
        <dbReference type="ChEBI" id="CHEBI:43474"/>
        <dbReference type="ChEBI" id="CHEBI:46858"/>
        <dbReference type="ChEBI" id="CHEBI:61978"/>
        <dbReference type="EC" id="3.1.3.48"/>
    </reaction>
    <physiologicalReaction direction="left-to-right" evidence="5">
        <dbReference type="Rhea" id="RHEA:10685"/>
    </physiologicalReaction>
</comment>
<comment type="catalytic activity">
    <reaction evidence="5">
        <text>O-phospho-L-threonyl-[protein] + H2O = L-threonyl-[protein] + phosphate</text>
        <dbReference type="Rhea" id="RHEA:47004"/>
        <dbReference type="Rhea" id="RHEA-COMP:11060"/>
        <dbReference type="Rhea" id="RHEA-COMP:11605"/>
        <dbReference type="ChEBI" id="CHEBI:15377"/>
        <dbReference type="ChEBI" id="CHEBI:30013"/>
        <dbReference type="ChEBI" id="CHEBI:43474"/>
        <dbReference type="ChEBI" id="CHEBI:61977"/>
        <dbReference type="EC" id="3.1.3.16"/>
    </reaction>
    <physiologicalReaction direction="left-to-right" evidence="7">
        <dbReference type="Rhea" id="RHEA:47005"/>
    </physiologicalReaction>
</comment>
<comment type="subunit">
    <text evidence="1">Interacts with MAPK14; this interaction does not lead to catalytic activation of DUSP2 and dephosphrylation of MAPK14.</text>
</comment>
<comment type="subcellular location">
    <subcellularLocation>
        <location>Nucleus</location>
    </subcellularLocation>
</comment>
<comment type="tissue specificity">
    <text>Expressed in hematopoietic tissues.</text>
</comment>
<comment type="induction">
    <text>By mitogens.</text>
</comment>
<comment type="similarity">
    <text evidence="6">Belongs to the protein-tyrosine phosphatase family. Non-receptor class dual specificity subfamily.</text>
</comment>
<feature type="chain" id="PRO_0000094793" description="Dual specificity protein phosphatase 2">
    <location>
        <begin position="1"/>
        <end position="314"/>
    </location>
</feature>
<feature type="domain" description="Rhodanese" evidence="3">
    <location>
        <begin position="23"/>
        <end position="144"/>
    </location>
</feature>
<feature type="domain" description="Tyrosine-protein phosphatase" evidence="2">
    <location>
        <begin position="172"/>
        <end position="313"/>
    </location>
</feature>
<feature type="active site" description="Phosphocysteine intermediate" evidence="2">
    <location>
        <position position="257"/>
    </location>
</feature>
<feature type="mutagenesis site" description="Loss of tyrosine phosphatase activity." evidence="5">
    <original>C</original>
    <variation>S</variation>
    <location>
        <position position="257"/>
    </location>
</feature>
<feature type="strand" evidence="9">
    <location>
        <begin position="174"/>
        <end position="176"/>
    </location>
</feature>
<feature type="turn" evidence="9">
    <location>
        <begin position="177"/>
        <end position="179"/>
    </location>
</feature>
<feature type="strand" evidence="9">
    <location>
        <begin position="180"/>
        <end position="182"/>
    </location>
</feature>
<feature type="helix" evidence="9">
    <location>
        <begin position="188"/>
        <end position="197"/>
    </location>
</feature>
<feature type="strand" evidence="9">
    <location>
        <begin position="200"/>
        <end position="204"/>
    </location>
</feature>
<feature type="strand" evidence="9">
    <location>
        <begin position="206"/>
        <end position="213"/>
    </location>
</feature>
<feature type="strand" evidence="9">
    <location>
        <begin position="215"/>
        <end position="221"/>
    </location>
</feature>
<feature type="helix" evidence="9">
    <location>
        <begin position="236"/>
        <end position="248"/>
    </location>
</feature>
<feature type="strand" evidence="9">
    <location>
        <begin position="253"/>
        <end position="255"/>
    </location>
</feature>
<feature type="strand" evidence="9">
    <location>
        <begin position="258"/>
        <end position="262"/>
    </location>
</feature>
<feature type="helix" evidence="9">
    <location>
        <begin position="263"/>
        <end position="274"/>
    </location>
</feature>
<feature type="helix" evidence="9">
    <location>
        <begin position="279"/>
        <end position="287"/>
    </location>
</feature>
<feature type="helix" evidence="9">
    <location>
        <begin position="305"/>
        <end position="311"/>
    </location>
</feature>
<dbReference type="EC" id="3.1.3.16" evidence="5"/>
<dbReference type="EC" id="3.1.3.48" evidence="4 5"/>
<dbReference type="EMBL" id="L11329">
    <property type="protein sequence ID" value="AAA50779.1"/>
    <property type="molecule type" value="mRNA"/>
</dbReference>
<dbReference type="EMBL" id="U23853">
    <property type="protein sequence ID" value="AAA86112.1"/>
    <property type="molecule type" value="Genomic_DNA"/>
</dbReference>
<dbReference type="EMBL" id="AC012307">
    <property type="protein sequence ID" value="AAY24222.1"/>
    <property type="molecule type" value="Genomic_DNA"/>
</dbReference>
<dbReference type="EMBL" id="CH471207">
    <property type="protein sequence ID" value="EAW71385.1"/>
    <property type="molecule type" value="Genomic_DNA"/>
</dbReference>
<dbReference type="EMBL" id="BC007771">
    <property type="protein sequence ID" value="AAH07771.1"/>
    <property type="molecule type" value="mRNA"/>
</dbReference>
<dbReference type="CCDS" id="CCDS2016.1"/>
<dbReference type="PIR" id="A57126">
    <property type="entry name" value="A57126"/>
</dbReference>
<dbReference type="RefSeq" id="NP_004409.1">
    <property type="nucleotide sequence ID" value="NM_004418.4"/>
</dbReference>
<dbReference type="PDB" id="1M3G">
    <property type="method" value="NMR"/>
    <property type="chains" value="A=170-314"/>
</dbReference>
<dbReference type="PDBsum" id="1M3G"/>
<dbReference type="BMRB" id="Q05923"/>
<dbReference type="SMR" id="Q05923"/>
<dbReference type="BioGRID" id="108177">
    <property type="interactions" value="92"/>
</dbReference>
<dbReference type="FunCoup" id="Q05923">
    <property type="interactions" value="1690"/>
</dbReference>
<dbReference type="IntAct" id="Q05923">
    <property type="interactions" value="5"/>
</dbReference>
<dbReference type="MINT" id="Q05923"/>
<dbReference type="STRING" id="9606.ENSP00000288943"/>
<dbReference type="BindingDB" id="Q05923"/>
<dbReference type="ChEMBL" id="CHEMBL2157858"/>
<dbReference type="DEPOD" id="DUSP2"/>
<dbReference type="GlyGen" id="Q05923">
    <property type="glycosylation" value="1 site"/>
</dbReference>
<dbReference type="iPTMnet" id="Q05923"/>
<dbReference type="PhosphoSitePlus" id="Q05923"/>
<dbReference type="BioMuta" id="DUSP2"/>
<dbReference type="DMDM" id="464334"/>
<dbReference type="MassIVE" id="Q05923"/>
<dbReference type="PaxDb" id="9606-ENSP00000288943"/>
<dbReference type="PeptideAtlas" id="Q05923"/>
<dbReference type="ProteomicsDB" id="58356"/>
<dbReference type="Antibodypedia" id="54258">
    <property type="antibodies" value="90 antibodies from 23 providers"/>
</dbReference>
<dbReference type="DNASU" id="1844"/>
<dbReference type="Ensembl" id="ENST00000288943.5">
    <property type="protein sequence ID" value="ENSP00000288943.4"/>
    <property type="gene ID" value="ENSG00000158050.6"/>
</dbReference>
<dbReference type="Ensembl" id="ENST00000718436.1">
    <property type="protein sequence ID" value="ENSP00000520821.1"/>
    <property type="gene ID" value="ENSG00000158050.6"/>
</dbReference>
<dbReference type="GeneID" id="1844"/>
<dbReference type="KEGG" id="hsa:1844"/>
<dbReference type="MANE-Select" id="ENST00000288943.5">
    <property type="protein sequence ID" value="ENSP00000288943.4"/>
    <property type="RefSeq nucleotide sequence ID" value="NM_004418.4"/>
    <property type="RefSeq protein sequence ID" value="NP_004409.1"/>
</dbReference>
<dbReference type="UCSC" id="uc002svk.5">
    <property type="organism name" value="human"/>
</dbReference>
<dbReference type="AGR" id="HGNC:3068"/>
<dbReference type="CTD" id="1844"/>
<dbReference type="DisGeNET" id="1844"/>
<dbReference type="GeneCards" id="DUSP2"/>
<dbReference type="HGNC" id="HGNC:3068">
    <property type="gene designation" value="DUSP2"/>
</dbReference>
<dbReference type="HPA" id="ENSG00000158050">
    <property type="expression patterns" value="Tissue enhanced (bone)"/>
</dbReference>
<dbReference type="MalaCards" id="DUSP2"/>
<dbReference type="MIM" id="603068">
    <property type="type" value="gene"/>
</dbReference>
<dbReference type="neXtProt" id="NX_Q05923"/>
<dbReference type="OpenTargets" id="ENSG00000158050"/>
<dbReference type="PharmGKB" id="PA27525"/>
<dbReference type="VEuPathDB" id="HostDB:ENSG00000158050"/>
<dbReference type="eggNOG" id="KOG1716">
    <property type="taxonomic scope" value="Eukaryota"/>
</dbReference>
<dbReference type="GeneTree" id="ENSGT00940000161605"/>
<dbReference type="HOGENOM" id="CLU_027074_0_2_1"/>
<dbReference type="InParanoid" id="Q05923"/>
<dbReference type="OMA" id="EARPVHW"/>
<dbReference type="OrthoDB" id="165342at2759"/>
<dbReference type="PAN-GO" id="Q05923">
    <property type="GO annotations" value="6 GO annotations based on evolutionary models"/>
</dbReference>
<dbReference type="PhylomeDB" id="Q05923"/>
<dbReference type="TreeFam" id="TF105122"/>
<dbReference type="BRENDA" id="3.1.3.16">
    <property type="organism ID" value="2681"/>
</dbReference>
<dbReference type="PathwayCommons" id="Q05923"/>
<dbReference type="Reactome" id="R-HSA-112409">
    <property type="pathway name" value="RAF-independent MAPK1/3 activation"/>
</dbReference>
<dbReference type="Reactome" id="R-HSA-5675221">
    <property type="pathway name" value="Negative regulation of MAPK pathway"/>
</dbReference>
<dbReference type="SignaLink" id="Q05923"/>
<dbReference type="SIGNOR" id="Q05923"/>
<dbReference type="BioGRID-ORCS" id="1844">
    <property type="hits" value="15 hits in 1167 CRISPR screens"/>
</dbReference>
<dbReference type="ChiTaRS" id="DUSP2">
    <property type="organism name" value="human"/>
</dbReference>
<dbReference type="EvolutionaryTrace" id="Q05923"/>
<dbReference type="GeneWiki" id="DUSP2"/>
<dbReference type="GenomeRNAi" id="1844"/>
<dbReference type="Pharos" id="Q05923">
    <property type="development level" value="Tbio"/>
</dbReference>
<dbReference type="PRO" id="PR:Q05923"/>
<dbReference type="Proteomes" id="UP000005640">
    <property type="component" value="Chromosome 2"/>
</dbReference>
<dbReference type="RNAct" id="Q05923">
    <property type="molecule type" value="protein"/>
</dbReference>
<dbReference type="Bgee" id="ENSG00000158050">
    <property type="expression patterns" value="Expressed in seminal vesicle and 139 other cell types or tissues"/>
</dbReference>
<dbReference type="GO" id="GO:0005737">
    <property type="term" value="C:cytoplasm"/>
    <property type="evidence" value="ECO:0000318"/>
    <property type="project" value="GO_Central"/>
</dbReference>
<dbReference type="GO" id="GO:0031965">
    <property type="term" value="C:nuclear membrane"/>
    <property type="evidence" value="ECO:0000314"/>
    <property type="project" value="HPA"/>
</dbReference>
<dbReference type="GO" id="GO:0005654">
    <property type="term" value="C:nucleoplasm"/>
    <property type="evidence" value="ECO:0000314"/>
    <property type="project" value="HPA"/>
</dbReference>
<dbReference type="GO" id="GO:0005634">
    <property type="term" value="C:nucleus"/>
    <property type="evidence" value="ECO:0000318"/>
    <property type="project" value="GO_Central"/>
</dbReference>
<dbReference type="GO" id="GO:0017017">
    <property type="term" value="F:MAP kinase tyrosine/serine/threonine phosphatase activity"/>
    <property type="evidence" value="ECO:0007669"/>
    <property type="project" value="InterPro"/>
</dbReference>
<dbReference type="GO" id="GO:0051019">
    <property type="term" value="F:mitogen-activated protein kinase binding"/>
    <property type="evidence" value="ECO:0007669"/>
    <property type="project" value="Ensembl"/>
</dbReference>
<dbReference type="GO" id="GO:0004721">
    <property type="term" value="F:phosphoprotein phosphatase activity"/>
    <property type="evidence" value="ECO:0000318"/>
    <property type="project" value="GO_Central"/>
</dbReference>
<dbReference type="GO" id="GO:0004722">
    <property type="term" value="F:protein serine/threonine phosphatase activity"/>
    <property type="evidence" value="ECO:0007669"/>
    <property type="project" value="UniProtKB-EC"/>
</dbReference>
<dbReference type="GO" id="GO:0004725">
    <property type="term" value="F:protein tyrosine phosphatase activity"/>
    <property type="evidence" value="ECO:0000304"/>
    <property type="project" value="ProtInc"/>
</dbReference>
<dbReference type="GO" id="GO:0008330">
    <property type="term" value="F:protein tyrosine/threonine phosphatase activity"/>
    <property type="evidence" value="ECO:0000304"/>
    <property type="project" value="ProtInc"/>
</dbReference>
<dbReference type="GO" id="GO:0001706">
    <property type="term" value="P:endoderm formation"/>
    <property type="evidence" value="ECO:0000318"/>
    <property type="project" value="GO_Central"/>
</dbReference>
<dbReference type="GO" id="GO:0043409">
    <property type="term" value="P:negative regulation of MAPK cascade"/>
    <property type="evidence" value="ECO:0000318"/>
    <property type="project" value="GO_Central"/>
</dbReference>
<dbReference type="GO" id="GO:0006470">
    <property type="term" value="P:protein dephosphorylation"/>
    <property type="evidence" value="ECO:0000304"/>
    <property type="project" value="ProtInc"/>
</dbReference>
<dbReference type="GO" id="GO:0007165">
    <property type="term" value="P:signal transduction"/>
    <property type="evidence" value="ECO:0000318"/>
    <property type="project" value="GO_Central"/>
</dbReference>
<dbReference type="CDD" id="cd14641">
    <property type="entry name" value="DSP_DUSP2"/>
    <property type="match status" value="1"/>
</dbReference>
<dbReference type="CDD" id="cd01446">
    <property type="entry name" value="DSP_MapKP"/>
    <property type="match status" value="1"/>
</dbReference>
<dbReference type="FunFam" id="3.40.250.10:FF:000034">
    <property type="entry name" value="Dual specificity phosphatase 2"/>
    <property type="match status" value="1"/>
</dbReference>
<dbReference type="FunFam" id="3.90.190.10:FF:000015">
    <property type="entry name" value="Dual specificity phosphatase 4"/>
    <property type="match status" value="1"/>
</dbReference>
<dbReference type="Gene3D" id="3.90.190.10">
    <property type="entry name" value="Protein tyrosine phosphatase superfamily"/>
    <property type="match status" value="1"/>
</dbReference>
<dbReference type="Gene3D" id="3.40.250.10">
    <property type="entry name" value="Rhodanese-like domain"/>
    <property type="match status" value="1"/>
</dbReference>
<dbReference type="InterPro" id="IPR000340">
    <property type="entry name" value="Dual-sp_phosphatase_cat-dom"/>
</dbReference>
<dbReference type="InterPro" id="IPR008343">
    <property type="entry name" value="MKP"/>
</dbReference>
<dbReference type="InterPro" id="IPR029021">
    <property type="entry name" value="Prot-tyrosine_phosphatase-like"/>
</dbReference>
<dbReference type="InterPro" id="IPR001763">
    <property type="entry name" value="Rhodanese-like_dom"/>
</dbReference>
<dbReference type="InterPro" id="IPR036873">
    <property type="entry name" value="Rhodanese-like_dom_sf"/>
</dbReference>
<dbReference type="InterPro" id="IPR016130">
    <property type="entry name" value="Tyr_Pase_AS"/>
</dbReference>
<dbReference type="InterPro" id="IPR003595">
    <property type="entry name" value="Tyr_Pase_cat"/>
</dbReference>
<dbReference type="InterPro" id="IPR000387">
    <property type="entry name" value="Tyr_Pase_dom"/>
</dbReference>
<dbReference type="InterPro" id="IPR020422">
    <property type="entry name" value="TYR_PHOSPHATASE_DUAL_dom"/>
</dbReference>
<dbReference type="PANTHER" id="PTHR10159">
    <property type="entry name" value="DUAL SPECIFICITY PROTEIN PHOSPHATASE"/>
    <property type="match status" value="1"/>
</dbReference>
<dbReference type="PANTHER" id="PTHR10159:SF109">
    <property type="entry name" value="DUAL SPECIFICITY PROTEIN PHOSPHATASE 2"/>
    <property type="match status" value="1"/>
</dbReference>
<dbReference type="Pfam" id="PF00782">
    <property type="entry name" value="DSPc"/>
    <property type="match status" value="1"/>
</dbReference>
<dbReference type="Pfam" id="PF00581">
    <property type="entry name" value="Rhodanese"/>
    <property type="match status" value="1"/>
</dbReference>
<dbReference type="PIRSF" id="PIRSF000939">
    <property type="entry name" value="MAPK_Ptase"/>
    <property type="match status" value="1"/>
</dbReference>
<dbReference type="PRINTS" id="PR01764">
    <property type="entry name" value="MAPKPHPHTASE"/>
</dbReference>
<dbReference type="SMART" id="SM00195">
    <property type="entry name" value="DSPc"/>
    <property type="match status" value="1"/>
</dbReference>
<dbReference type="SMART" id="SM00404">
    <property type="entry name" value="PTPc_motif"/>
    <property type="match status" value="1"/>
</dbReference>
<dbReference type="SMART" id="SM00450">
    <property type="entry name" value="RHOD"/>
    <property type="match status" value="1"/>
</dbReference>
<dbReference type="SUPFAM" id="SSF52799">
    <property type="entry name" value="(Phosphotyrosine protein) phosphatases II"/>
    <property type="match status" value="1"/>
</dbReference>
<dbReference type="SUPFAM" id="SSF52821">
    <property type="entry name" value="Rhodanese/Cell cycle control phosphatase"/>
    <property type="match status" value="1"/>
</dbReference>
<dbReference type="PROSITE" id="PS50206">
    <property type="entry name" value="RHODANESE_3"/>
    <property type="match status" value="1"/>
</dbReference>
<dbReference type="PROSITE" id="PS00383">
    <property type="entry name" value="TYR_PHOSPHATASE_1"/>
    <property type="match status" value="1"/>
</dbReference>
<dbReference type="PROSITE" id="PS50056">
    <property type="entry name" value="TYR_PHOSPHATASE_2"/>
    <property type="match status" value="1"/>
</dbReference>
<dbReference type="PROSITE" id="PS50054">
    <property type="entry name" value="TYR_PHOSPHATASE_DUAL"/>
    <property type="match status" value="1"/>
</dbReference>
<accession>Q05923</accession>
<accession>Q53T45</accession>
<organism>
    <name type="scientific">Homo sapiens</name>
    <name type="common">Human</name>
    <dbReference type="NCBI Taxonomy" id="9606"/>
    <lineage>
        <taxon>Eukaryota</taxon>
        <taxon>Metazoa</taxon>
        <taxon>Chordata</taxon>
        <taxon>Craniata</taxon>
        <taxon>Vertebrata</taxon>
        <taxon>Euteleostomi</taxon>
        <taxon>Mammalia</taxon>
        <taxon>Eutheria</taxon>
        <taxon>Euarchontoglires</taxon>
        <taxon>Primates</taxon>
        <taxon>Haplorrhini</taxon>
        <taxon>Catarrhini</taxon>
        <taxon>Hominidae</taxon>
        <taxon>Homo</taxon>
    </lineage>
</organism>
<proteinExistence type="evidence at protein level"/>
<evidence type="ECO:0000250" key="1">
    <source>
        <dbReference type="UniProtKB" id="Q05922"/>
    </source>
</evidence>
<evidence type="ECO:0000255" key="2">
    <source>
        <dbReference type="PROSITE-ProRule" id="PRU00160"/>
    </source>
</evidence>
<evidence type="ECO:0000255" key="3">
    <source>
        <dbReference type="PROSITE-ProRule" id="PRU00173"/>
    </source>
</evidence>
<evidence type="ECO:0000255" key="4">
    <source>
        <dbReference type="PROSITE-ProRule" id="PRU10044"/>
    </source>
</evidence>
<evidence type="ECO:0000269" key="5">
    <source>
    </source>
</evidence>
<evidence type="ECO:0000305" key="6"/>
<evidence type="ECO:0000305" key="7">
    <source>
    </source>
</evidence>
<evidence type="ECO:0000312" key="8">
    <source>
        <dbReference type="HGNC" id="HGNC:3068"/>
    </source>
</evidence>
<evidence type="ECO:0007829" key="9">
    <source>
        <dbReference type="PDB" id="1M3G"/>
    </source>
</evidence>
<keyword id="KW-0002">3D-structure</keyword>
<keyword id="KW-0378">Hydrolase</keyword>
<keyword id="KW-0539">Nucleus</keyword>
<keyword id="KW-0904">Protein phosphatase</keyword>
<keyword id="KW-1267">Proteomics identification</keyword>
<keyword id="KW-1185">Reference proteome</keyword>
<name>DUSP2_HUMAN</name>
<sequence length="314" mass="34400">MGLEAARELECAALGTLLRDPREAERTLLLDCRPFLAFCRRHVRAARPVPWNALLRRRARGPPAAVLACLLPDRALRTRLVRGELARAVVLDEGSASVAELRPDSPAHVLLAALLHETRAGPTAVYFLRGGFDGFQGCCPDLCSEAPAPALPPTGDKTSRSDSRAPVYDQGGPVEILPYLFLGSCSHSSDLQGLQACGITAVLNVSASCPNHFEGLFRYKSIPVEDNQMVEISAWFQEAIGFIDWVKNSGGRVLVHCQAGISRSATICLAYLMQSRRVRLDEAFDFVKQRRGVISPNFSFMGQLLQFETQVLCH</sequence>
<gene>
    <name evidence="8" type="primary">DUSP2</name>
    <name type="synonym">PAC1</name>
</gene>
<protein>
    <recommendedName>
        <fullName evidence="6">Dual specificity protein phosphatase 2</fullName>
        <ecNumber evidence="5">3.1.3.16</ecNumber>
        <ecNumber evidence="4 5">3.1.3.48</ecNumber>
    </recommendedName>
    <alternativeName>
        <fullName>Dual specificity protein phosphatase PAC-1</fullName>
    </alternativeName>
</protein>